<name>MSRB_STAA2</name>
<evidence type="ECO:0000255" key="1">
    <source>
        <dbReference type="HAMAP-Rule" id="MF_01400"/>
    </source>
</evidence>
<evidence type="ECO:0000255" key="2">
    <source>
        <dbReference type="PROSITE-ProRule" id="PRU01126"/>
    </source>
</evidence>
<feature type="chain" id="PRO_1000087342" description="Peptide methionine sulfoxide reductase MsrB">
    <location>
        <begin position="1"/>
        <end position="142"/>
    </location>
</feature>
<feature type="domain" description="MsrB" evidence="2">
    <location>
        <begin position="2"/>
        <end position="125"/>
    </location>
</feature>
<feature type="active site" description="Nucleophile" evidence="2">
    <location>
        <position position="114"/>
    </location>
</feature>
<gene>
    <name evidence="1" type="primary">msrB</name>
    <name type="ordered locus">SaurJH1_1512</name>
</gene>
<keyword id="KW-0560">Oxidoreductase</keyword>
<sequence length="142" mass="16263">MLKKDKSELTDIEYIVTQENGTEPPFMNEYWNHFAKGIYVDKISGKPLFTSEEKFHSECGWPSFSKALDDDEIIELVDKSFGMVRTEVRSEESNSHLGHVFNDGPKESGGLRYCINSAAIQFIPYEKLEELGYGDLISHFDK</sequence>
<comment type="catalytic activity">
    <reaction evidence="1">
        <text>L-methionyl-[protein] + [thioredoxin]-disulfide + H2O = L-methionyl-(R)-S-oxide-[protein] + [thioredoxin]-dithiol</text>
        <dbReference type="Rhea" id="RHEA:24164"/>
        <dbReference type="Rhea" id="RHEA-COMP:10698"/>
        <dbReference type="Rhea" id="RHEA-COMP:10700"/>
        <dbReference type="Rhea" id="RHEA-COMP:12313"/>
        <dbReference type="Rhea" id="RHEA-COMP:12314"/>
        <dbReference type="ChEBI" id="CHEBI:15377"/>
        <dbReference type="ChEBI" id="CHEBI:16044"/>
        <dbReference type="ChEBI" id="CHEBI:29950"/>
        <dbReference type="ChEBI" id="CHEBI:45764"/>
        <dbReference type="ChEBI" id="CHEBI:50058"/>
        <dbReference type="EC" id="1.8.4.12"/>
    </reaction>
</comment>
<comment type="similarity">
    <text evidence="1">Belongs to the MsrB Met sulfoxide reductase family.</text>
</comment>
<organism>
    <name type="scientific">Staphylococcus aureus (strain JH1)</name>
    <dbReference type="NCBI Taxonomy" id="359787"/>
    <lineage>
        <taxon>Bacteria</taxon>
        <taxon>Bacillati</taxon>
        <taxon>Bacillota</taxon>
        <taxon>Bacilli</taxon>
        <taxon>Bacillales</taxon>
        <taxon>Staphylococcaceae</taxon>
        <taxon>Staphylococcus</taxon>
    </lineage>
</organism>
<accession>A6U1P3</accession>
<proteinExistence type="inferred from homology"/>
<reference key="1">
    <citation type="submission" date="2007-06" db="EMBL/GenBank/DDBJ databases">
        <title>Complete sequence of chromosome of Staphylococcus aureus subsp. aureus JH1.</title>
        <authorList>
            <consortium name="US DOE Joint Genome Institute"/>
            <person name="Copeland A."/>
            <person name="Lucas S."/>
            <person name="Lapidus A."/>
            <person name="Barry K."/>
            <person name="Detter J.C."/>
            <person name="Glavina del Rio T."/>
            <person name="Hammon N."/>
            <person name="Israni S."/>
            <person name="Dalin E."/>
            <person name="Tice H."/>
            <person name="Pitluck S."/>
            <person name="Chain P."/>
            <person name="Malfatti S."/>
            <person name="Shin M."/>
            <person name="Vergez L."/>
            <person name="Schmutz J."/>
            <person name="Larimer F."/>
            <person name="Land M."/>
            <person name="Hauser L."/>
            <person name="Kyrpides N."/>
            <person name="Ivanova N."/>
            <person name="Tomasz A."/>
            <person name="Richardson P."/>
        </authorList>
    </citation>
    <scope>NUCLEOTIDE SEQUENCE [LARGE SCALE GENOMIC DNA]</scope>
    <source>
        <strain>JH1</strain>
    </source>
</reference>
<dbReference type="EC" id="1.8.4.12" evidence="1"/>
<dbReference type="EMBL" id="CP000736">
    <property type="protein sequence ID" value="ABR52361.1"/>
    <property type="molecule type" value="Genomic_DNA"/>
</dbReference>
<dbReference type="SMR" id="A6U1P3"/>
<dbReference type="KEGG" id="sah:SaurJH1_1512"/>
<dbReference type="HOGENOM" id="CLU_031040_8_5_9"/>
<dbReference type="GO" id="GO:0005737">
    <property type="term" value="C:cytoplasm"/>
    <property type="evidence" value="ECO:0007669"/>
    <property type="project" value="TreeGrafter"/>
</dbReference>
<dbReference type="GO" id="GO:0033743">
    <property type="term" value="F:peptide-methionine (R)-S-oxide reductase activity"/>
    <property type="evidence" value="ECO:0007669"/>
    <property type="project" value="UniProtKB-UniRule"/>
</dbReference>
<dbReference type="GO" id="GO:0030091">
    <property type="term" value="P:protein repair"/>
    <property type="evidence" value="ECO:0007669"/>
    <property type="project" value="InterPro"/>
</dbReference>
<dbReference type="GO" id="GO:0006979">
    <property type="term" value="P:response to oxidative stress"/>
    <property type="evidence" value="ECO:0007669"/>
    <property type="project" value="InterPro"/>
</dbReference>
<dbReference type="FunFam" id="2.170.150.20:FF:000003">
    <property type="entry name" value="Peptide methionine sulfoxide reductase MsrB"/>
    <property type="match status" value="1"/>
</dbReference>
<dbReference type="Gene3D" id="2.170.150.20">
    <property type="entry name" value="Peptide methionine sulfoxide reductase"/>
    <property type="match status" value="1"/>
</dbReference>
<dbReference type="HAMAP" id="MF_01400">
    <property type="entry name" value="MsrB"/>
    <property type="match status" value="1"/>
</dbReference>
<dbReference type="InterPro" id="IPR028427">
    <property type="entry name" value="Met_Sox_Rdtase_MsrB"/>
</dbReference>
<dbReference type="InterPro" id="IPR002579">
    <property type="entry name" value="Met_Sox_Rdtase_MsrB_dom"/>
</dbReference>
<dbReference type="InterPro" id="IPR011057">
    <property type="entry name" value="Mss4-like_sf"/>
</dbReference>
<dbReference type="NCBIfam" id="TIGR00357">
    <property type="entry name" value="peptide-methionine (R)-S-oxide reductase MsrB"/>
    <property type="match status" value="1"/>
</dbReference>
<dbReference type="PANTHER" id="PTHR10173">
    <property type="entry name" value="METHIONINE SULFOXIDE REDUCTASE"/>
    <property type="match status" value="1"/>
</dbReference>
<dbReference type="PANTHER" id="PTHR10173:SF59">
    <property type="entry name" value="PEPTIDE METHIONINE SULFOXIDE REDUCTASE MSRA_MSRB"/>
    <property type="match status" value="1"/>
</dbReference>
<dbReference type="Pfam" id="PF01641">
    <property type="entry name" value="SelR"/>
    <property type="match status" value="1"/>
</dbReference>
<dbReference type="SUPFAM" id="SSF51316">
    <property type="entry name" value="Mss4-like"/>
    <property type="match status" value="1"/>
</dbReference>
<dbReference type="PROSITE" id="PS51790">
    <property type="entry name" value="MSRB"/>
    <property type="match status" value="1"/>
</dbReference>
<protein>
    <recommendedName>
        <fullName evidence="1">Peptide methionine sulfoxide reductase MsrB</fullName>
        <ecNumber evidence="1">1.8.4.12</ecNumber>
    </recommendedName>
    <alternativeName>
        <fullName evidence="1">Peptide-methionine (R)-S-oxide reductase</fullName>
    </alternativeName>
</protein>